<reference key="1">
    <citation type="journal article" date="2010" name="J. Bacteriol.">
        <title>The genetic basis of laboratory adaptation in Caulobacter crescentus.</title>
        <authorList>
            <person name="Marks M.E."/>
            <person name="Castro-Rojas C.M."/>
            <person name="Teiling C."/>
            <person name="Du L."/>
            <person name="Kapatral V."/>
            <person name="Walunas T.L."/>
            <person name="Crosson S."/>
        </authorList>
    </citation>
    <scope>NUCLEOTIDE SEQUENCE [LARGE SCALE GENOMIC DNA]</scope>
    <source>
        <strain>NA1000 / CB15N</strain>
    </source>
</reference>
<proteinExistence type="inferred from homology"/>
<name>GUAA_CAUVN</name>
<gene>
    <name evidence="1" type="primary">guaA</name>
    <name type="ordered locus">CCNA_01692</name>
</gene>
<protein>
    <recommendedName>
        <fullName evidence="1">GMP synthase [glutamine-hydrolyzing]</fullName>
        <ecNumber evidence="1">6.3.5.2</ecNumber>
    </recommendedName>
    <alternativeName>
        <fullName evidence="1">GMP synthetase</fullName>
    </alternativeName>
    <alternativeName>
        <fullName evidence="1">Glutamine amidotransferase</fullName>
    </alternativeName>
</protein>
<keyword id="KW-0067">ATP-binding</keyword>
<keyword id="KW-0315">Glutamine amidotransferase</keyword>
<keyword id="KW-0332">GMP biosynthesis</keyword>
<keyword id="KW-0436">Ligase</keyword>
<keyword id="KW-0547">Nucleotide-binding</keyword>
<keyword id="KW-0658">Purine biosynthesis</keyword>
<keyword id="KW-1185">Reference proteome</keyword>
<evidence type="ECO:0000255" key="1">
    <source>
        <dbReference type="HAMAP-Rule" id="MF_00344"/>
    </source>
</evidence>
<dbReference type="EC" id="6.3.5.2" evidence="1"/>
<dbReference type="EMBL" id="CP001340">
    <property type="protein sequence ID" value="ACL95157.1"/>
    <property type="molecule type" value="Genomic_DNA"/>
</dbReference>
<dbReference type="RefSeq" id="WP_010919494.1">
    <property type="nucleotide sequence ID" value="NC_011916.1"/>
</dbReference>
<dbReference type="RefSeq" id="YP_002517065.1">
    <property type="nucleotide sequence ID" value="NC_011916.1"/>
</dbReference>
<dbReference type="SMR" id="B8GVI7"/>
<dbReference type="MEROPS" id="C26.957"/>
<dbReference type="GeneID" id="7331752"/>
<dbReference type="KEGG" id="ccs:CCNA_01692"/>
<dbReference type="PATRIC" id="fig|565050.3.peg.1666"/>
<dbReference type="HOGENOM" id="CLU_014340_0_5_5"/>
<dbReference type="OrthoDB" id="9802219at2"/>
<dbReference type="PhylomeDB" id="B8GVI7"/>
<dbReference type="UniPathway" id="UPA00189">
    <property type="reaction ID" value="UER00296"/>
</dbReference>
<dbReference type="Proteomes" id="UP000001364">
    <property type="component" value="Chromosome"/>
</dbReference>
<dbReference type="GO" id="GO:0005829">
    <property type="term" value="C:cytosol"/>
    <property type="evidence" value="ECO:0007669"/>
    <property type="project" value="TreeGrafter"/>
</dbReference>
<dbReference type="GO" id="GO:0005524">
    <property type="term" value="F:ATP binding"/>
    <property type="evidence" value="ECO:0007669"/>
    <property type="project" value="UniProtKB-UniRule"/>
</dbReference>
<dbReference type="GO" id="GO:0003921">
    <property type="term" value="F:GMP synthase activity"/>
    <property type="evidence" value="ECO:0007669"/>
    <property type="project" value="InterPro"/>
</dbReference>
<dbReference type="CDD" id="cd01742">
    <property type="entry name" value="GATase1_GMP_Synthase"/>
    <property type="match status" value="1"/>
</dbReference>
<dbReference type="CDD" id="cd01997">
    <property type="entry name" value="GMP_synthase_C"/>
    <property type="match status" value="1"/>
</dbReference>
<dbReference type="FunFam" id="3.30.300.10:FF:000002">
    <property type="entry name" value="GMP synthase [glutamine-hydrolyzing]"/>
    <property type="match status" value="1"/>
</dbReference>
<dbReference type="FunFam" id="3.40.50.620:FF:000001">
    <property type="entry name" value="GMP synthase [glutamine-hydrolyzing]"/>
    <property type="match status" value="1"/>
</dbReference>
<dbReference type="FunFam" id="3.40.50.880:FF:000001">
    <property type="entry name" value="GMP synthase [glutamine-hydrolyzing]"/>
    <property type="match status" value="1"/>
</dbReference>
<dbReference type="Gene3D" id="3.30.300.10">
    <property type="match status" value="1"/>
</dbReference>
<dbReference type="Gene3D" id="3.40.50.880">
    <property type="match status" value="1"/>
</dbReference>
<dbReference type="Gene3D" id="3.40.50.620">
    <property type="entry name" value="HUPs"/>
    <property type="match status" value="1"/>
</dbReference>
<dbReference type="HAMAP" id="MF_00344">
    <property type="entry name" value="GMP_synthase"/>
    <property type="match status" value="1"/>
</dbReference>
<dbReference type="InterPro" id="IPR029062">
    <property type="entry name" value="Class_I_gatase-like"/>
</dbReference>
<dbReference type="InterPro" id="IPR017926">
    <property type="entry name" value="GATASE"/>
</dbReference>
<dbReference type="InterPro" id="IPR001674">
    <property type="entry name" value="GMP_synth_C"/>
</dbReference>
<dbReference type="InterPro" id="IPR004739">
    <property type="entry name" value="GMP_synth_GATase"/>
</dbReference>
<dbReference type="InterPro" id="IPR022955">
    <property type="entry name" value="GMP_synthase"/>
</dbReference>
<dbReference type="InterPro" id="IPR025777">
    <property type="entry name" value="GMPS_ATP_PPase_dom"/>
</dbReference>
<dbReference type="InterPro" id="IPR022310">
    <property type="entry name" value="NAD/GMP_synthase"/>
</dbReference>
<dbReference type="InterPro" id="IPR014729">
    <property type="entry name" value="Rossmann-like_a/b/a_fold"/>
</dbReference>
<dbReference type="NCBIfam" id="TIGR00884">
    <property type="entry name" value="guaA_Cterm"/>
    <property type="match status" value="1"/>
</dbReference>
<dbReference type="NCBIfam" id="TIGR00888">
    <property type="entry name" value="guaA_Nterm"/>
    <property type="match status" value="1"/>
</dbReference>
<dbReference type="NCBIfam" id="NF000848">
    <property type="entry name" value="PRK00074.1"/>
    <property type="match status" value="1"/>
</dbReference>
<dbReference type="PANTHER" id="PTHR11922:SF2">
    <property type="entry name" value="GMP SYNTHASE [GLUTAMINE-HYDROLYZING]"/>
    <property type="match status" value="1"/>
</dbReference>
<dbReference type="PANTHER" id="PTHR11922">
    <property type="entry name" value="GMP SYNTHASE-RELATED"/>
    <property type="match status" value="1"/>
</dbReference>
<dbReference type="Pfam" id="PF00117">
    <property type="entry name" value="GATase"/>
    <property type="match status" value="1"/>
</dbReference>
<dbReference type="Pfam" id="PF00958">
    <property type="entry name" value="GMP_synt_C"/>
    <property type="match status" value="1"/>
</dbReference>
<dbReference type="Pfam" id="PF02540">
    <property type="entry name" value="NAD_synthase"/>
    <property type="match status" value="1"/>
</dbReference>
<dbReference type="PRINTS" id="PR00096">
    <property type="entry name" value="GATASE"/>
</dbReference>
<dbReference type="SUPFAM" id="SSF52402">
    <property type="entry name" value="Adenine nucleotide alpha hydrolases-like"/>
    <property type="match status" value="1"/>
</dbReference>
<dbReference type="SUPFAM" id="SSF52317">
    <property type="entry name" value="Class I glutamine amidotransferase-like"/>
    <property type="match status" value="1"/>
</dbReference>
<dbReference type="SUPFAM" id="SSF54810">
    <property type="entry name" value="GMP synthetase C-terminal dimerisation domain"/>
    <property type="match status" value="1"/>
</dbReference>
<dbReference type="PROSITE" id="PS51273">
    <property type="entry name" value="GATASE_TYPE_1"/>
    <property type="match status" value="1"/>
</dbReference>
<dbReference type="PROSITE" id="PS51553">
    <property type="entry name" value="GMPS_ATP_PPASE"/>
    <property type="match status" value="1"/>
</dbReference>
<sequence length="520" mass="56338">MTQKTDHQRVLIVDFGSQVTQLIARRVREAGVYCEIHPFDKAEAIVDEYAPSAIILSGGPASVLEADSPRIGRKLFDLGLPLLAICYGQQLLCDVLSGKVEGGHAGEFGRAELTIGKDSPMFQGLAGVGGVETVWMSHGDRVTAIPEGFEVIGTSTGAPFAAIANDAKKIYALQFHPEVYHTVNGPAMYRNFLFNIAGLKGDWTMAAFRQEMVQKIRDQVGDGKVICGLSGGVDSSVAAVLIHEAIGDQLTCVFVDTGLLRKNEADQVVTLFRDHYNIPLVHVDAGDLFLGELAGVSDPETKRKTIGRLFIDVFDKEAAKIEGATFLAQGTLYPDVVESVSARGGPSAVIKSHHNVGGLPDYMKLKLVEPLRELFKDEVRALGVELGLAPAFVGRHPFPGPGLAIRIPGEITPEKVKVLQDADAIYLEEIRNAGLYDQIWQAFAVLLPVKTVGVMGDARTYENVLALRAVTSTDGMTADFFEFPWPVLGKTATRIINEVRGVNRVVYDVTSKPPGTIEWE</sequence>
<feature type="chain" id="PRO_1000190232" description="GMP synthase [glutamine-hydrolyzing]">
    <location>
        <begin position="1"/>
        <end position="520"/>
    </location>
</feature>
<feature type="domain" description="Glutamine amidotransferase type-1" evidence="1">
    <location>
        <begin position="9"/>
        <end position="202"/>
    </location>
</feature>
<feature type="domain" description="GMPS ATP-PPase" evidence="1">
    <location>
        <begin position="203"/>
        <end position="395"/>
    </location>
</feature>
<feature type="active site" description="Nucleophile" evidence="1">
    <location>
        <position position="86"/>
    </location>
</feature>
<feature type="active site" evidence="1">
    <location>
        <position position="176"/>
    </location>
</feature>
<feature type="active site" evidence="1">
    <location>
        <position position="178"/>
    </location>
</feature>
<feature type="binding site" evidence="1">
    <location>
        <begin position="230"/>
        <end position="236"/>
    </location>
    <ligand>
        <name>ATP</name>
        <dbReference type="ChEBI" id="CHEBI:30616"/>
    </ligand>
</feature>
<comment type="function">
    <text evidence="1">Catalyzes the synthesis of GMP from XMP.</text>
</comment>
<comment type="catalytic activity">
    <reaction evidence="1">
        <text>XMP + L-glutamine + ATP + H2O = GMP + L-glutamate + AMP + diphosphate + 2 H(+)</text>
        <dbReference type="Rhea" id="RHEA:11680"/>
        <dbReference type="ChEBI" id="CHEBI:15377"/>
        <dbReference type="ChEBI" id="CHEBI:15378"/>
        <dbReference type="ChEBI" id="CHEBI:29985"/>
        <dbReference type="ChEBI" id="CHEBI:30616"/>
        <dbReference type="ChEBI" id="CHEBI:33019"/>
        <dbReference type="ChEBI" id="CHEBI:57464"/>
        <dbReference type="ChEBI" id="CHEBI:58115"/>
        <dbReference type="ChEBI" id="CHEBI:58359"/>
        <dbReference type="ChEBI" id="CHEBI:456215"/>
        <dbReference type="EC" id="6.3.5.2"/>
    </reaction>
</comment>
<comment type="pathway">
    <text evidence="1">Purine metabolism; GMP biosynthesis; GMP from XMP (L-Gln route): step 1/1.</text>
</comment>
<comment type="subunit">
    <text evidence="1">Homodimer.</text>
</comment>
<accession>B8GVI7</accession>
<organism>
    <name type="scientific">Caulobacter vibrioides (strain NA1000 / CB15N)</name>
    <name type="common">Caulobacter crescentus</name>
    <dbReference type="NCBI Taxonomy" id="565050"/>
    <lineage>
        <taxon>Bacteria</taxon>
        <taxon>Pseudomonadati</taxon>
        <taxon>Pseudomonadota</taxon>
        <taxon>Alphaproteobacteria</taxon>
        <taxon>Caulobacterales</taxon>
        <taxon>Caulobacteraceae</taxon>
        <taxon>Caulobacter</taxon>
    </lineage>
</organism>